<proteinExistence type="inferred from homology"/>
<reference key="1">
    <citation type="journal article" date="2010" name="Environ. Microbiol.">
        <title>The genome of Syntrophomonas wolfei: new insights into syntrophic metabolism and biohydrogen production.</title>
        <authorList>
            <person name="Sieber J.R."/>
            <person name="Sims D.R."/>
            <person name="Han C."/>
            <person name="Kim E."/>
            <person name="Lykidis A."/>
            <person name="Lapidus A.L."/>
            <person name="McDonnald E."/>
            <person name="Rohlin L."/>
            <person name="Culley D.E."/>
            <person name="Gunsalus R."/>
            <person name="McInerney M.J."/>
        </authorList>
    </citation>
    <scope>NUCLEOTIDE SEQUENCE [LARGE SCALE GENOMIC DNA]</scope>
    <source>
        <strain>DSM 2245B / Goettingen</strain>
    </source>
</reference>
<gene>
    <name evidence="1" type="primary">infA</name>
    <name type="ordered locus">Swol_2309</name>
</gene>
<evidence type="ECO:0000255" key="1">
    <source>
        <dbReference type="HAMAP-Rule" id="MF_00075"/>
    </source>
</evidence>
<accession>Q0AUK4</accession>
<protein>
    <recommendedName>
        <fullName evidence="1">Translation initiation factor IF-1</fullName>
    </recommendedName>
</protein>
<feature type="chain" id="PRO_0000263889" description="Translation initiation factor IF-1">
    <location>
        <begin position="1"/>
        <end position="72"/>
    </location>
</feature>
<feature type="domain" description="S1-like" evidence="1">
    <location>
        <begin position="1"/>
        <end position="72"/>
    </location>
</feature>
<organism>
    <name type="scientific">Syntrophomonas wolfei subsp. wolfei (strain DSM 2245B / Goettingen)</name>
    <dbReference type="NCBI Taxonomy" id="335541"/>
    <lineage>
        <taxon>Bacteria</taxon>
        <taxon>Bacillati</taxon>
        <taxon>Bacillota</taxon>
        <taxon>Clostridia</taxon>
        <taxon>Eubacteriales</taxon>
        <taxon>Syntrophomonadaceae</taxon>
        <taxon>Syntrophomonas</taxon>
    </lineage>
</organism>
<dbReference type="EMBL" id="CP000448">
    <property type="protein sequence ID" value="ABI69600.1"/>
    <property type="molecule type" value="Genomic_DNA"/>
</dbReference>
<dbReference type="RefSeq" id="WP_011641684.1">
    <property type="nucleotide sequence ID" value="NC_008346.1"/>
</dbReference>
<dbReference type="SMR" id="Q0AUK4"/>
<dbReference type="STRING" id="335541.Swol_2309"/>
<dbReference type="KEGG" id="swo:Swol_2309"/>
<dbReference type="eggNOG" id="COG0361">
    <property type="taxonomic scope" value="Bacteria"/>
</dbReference>
<dbReference type="HOGENOM" id="CLU_151267_1_0_9"/>
<dbReference type="OrthoDB" id="9803250at2"/>
<dbReference type="Proteomes" id="UP000001968">
    <property type="component" value="Chromosome"/>
</dbReference>
<dbReference type="GO" id="GO:0005829">
    <property type="term" value="C:cytosol"/>
    <property type="evidence" value="ECO:0007669"/>
    <property type="project" value="TreeGrafter"/>
</dbReference>
<dbReference type="GO" id="GO:0043022">
    <property type="term" value="F:ribosome binding"/>
    <property type="evidence" value="ECO:0007669"/>
    <property type="project" value="UniProtKB-UniRule"/>
</dbReference>
<dbReference type="GO" id="GO:0019843">
    <property type="term" value="F:rRNA binding"/>
    <property type="evidence" value="ECO:0007669"/>
    <property type="project" value="UniProtKB-UniRule"/>
</dbReference>
<dbReference type="GO" id="GO:0003743">
    <property type="term" value="F:translation initiation factor activity"/>
    <property type="evidence" value="ECO:0007669"/>
    <property type="project" value="UniProtKB-UniRule"/>
</dbReference>
<dbReference type="CDD" id="cd04451">
    <property type="entry name" value="S1_IF1"/>
    <property type="match status" value="1"/>
</dbReference>
<dbReference type="FunFam" id="2.40.50.140:FF:000002">
    <property type="entry name" value="Translation initiation factor IF-1"/>
    <property type="match status" value="1"/>
</dbReference>
<dbReference type="Gene3D" id="2.40.50.140">
    <property type="entry name" value="Nucleic acid-binding proteins"/>
    <property type="match status" value="1"/>
</dbReference>
<dbReference type="HAMAP" id="MF_00075">
    <property type="entry name" value="IF_1"/>
    <property type="match status" value="1"/>
</dbReference>
<dbReference type="InterPro" id="IPR012340">
    <property type="entry name" value="NA-bd_OB-fold"/>
</dbReference>
<dbReference type="InterPro" id="IPR006196">
    <property type="entry name" value="RNA-binding_domain_S1_IF1"/>
</dbReference>
<dbReference type="InterPro" id="IPR003029">
    <property type="entry name" value="S1_domain"/>
</dbReference>
<dbReference type="InterPro" id="IPR004368">
    <property type="entry name" value="TIF_IF1"/>
</dbReference>
<dbReference type="NCBIfam" id="TIGR00008">
    <property type="entry name" value="infA"/>
    <property type="match status" value="1"/>
</dbReference>
<dbReference type="PANTHER" id="PTHR33370">
    <property type="entry name" value="TRANSLATION INITIATION FACTOR IF-1, CHLOROPLASTIC"/>
    <property type="match status" value="1"/>
</dbReference>
<dbReference type="PANTHER" id="PTHR33370:SF1">
    <property type="entry name" value="TRANSLATION INITIATION FACTOR IF-1, CHLOROPLASTIC"/>
    <property type="match status" value="1"/>
</dbReference>
<dbReference type="Pfam" id="PF01176">
    <property type="entry name" value="eIF-1a"/>
    <property type="match status" value="1"/>
</dbReference>
<dbReference type="SMART" id="SM00316">
    <property type="entry name" value="S1"/>
    <property type="match status" value="1"/>
</dbReference>
<dbReference type="SUPFAM" id="SSF50249">
    <property type="entry name" value="Nucleic acid-binding proteins"/>
    <property type="match status" value="1"/>
</dbReference>
<dbReference type="PROSITE" id="PS50832">
    <property type="entry name" value="S1_IF1_TYPE"/>
    <property type="match status" value="1"/>
</dbReference>
<sequence>MAKEDVIEVEGTVVEPLPNTMFKVELDNGHKVLAHISGKMRMNFVRILPGDRVMVELSPYDLNRGRIIYRFK</sequence>
<keyword id="KW-0963">Cytoplasm</keyword>
<keyword id="KW-0396">Initiation factor</keyword>
<keyword id="KW-0648">Protein biosynthesis</keyword>
<keyword id="KW-1185">Reference proteome</keyword>
<keyword id="KW-0694">RNA-binding</keyword>
<keyword id="KW-0699">rRNA-binding</keyword>
<name>IF1_SYNWW</name>
<comment type="function">
    <text evidence="1">One of the essential components for the initiation of protein synthesis. Stabilizes the binding of IF-2 and IF-3 on the 30S subunit to which N-formylmethionyl-tRNA(fMet) subsequently binds. Helps modulate mRNA selection, yielding the 30S pre-initiation complex (PIC). Upon addition of the 50S ribosomal subunit IF-1, IF-2 and IF-3 are released leaving the mature 70S translation initiation complex.</text>
</comment>
<comment type="subunit">
    <text evidence="1">Component of the 30S ribosomal translation pre-initiation complex which assembles on the 30S ribosome in the order IF-2 and IF-3, IF-1 and N-formylmethionyl-tRNA(fMet); mRNA recruitment can occur at any time during PIC assembly.</text>
</comment>
<comment type="subcellular location">
    <subcellularLocation>
        <location evidence="1">Cytoplasm</location>
    </subcellularLocation>
</comment>
<comment type="similarity">
    <text evidence="1">Belongs to the IF-1 family.</text>
</comment>